<organism>
    <name type="scientific">Shewanella oneidensis (strain ATCC 700550 / JCM 31522 / CIP 106686 / LMG 19005 / NCIMB 14063 / MR-1)</name>
    <dbReference type="NCBI Taxonomy" id="211586"/>
    <lineage>
        <taxon>Bacteria</taxon>
        <taxon>Pseudomonadati</taxon>
        <taxon>Pseudomonadota</taxon>
        <taxon>Gammaproteobacteria</taxon>
        <taxon>Alteromonadales</taxon>
        <taxon>Shewanellaceae</taxon>
        <taxon>Shewanella</taxon>
    </lineage>
</organism>
<protein>
    <recommendedName>
        <fullName evidence="1">ATP-dependent RNA helicase RhlB</fullName>
        <ecNumber evidence="1">3.6.4.13</ecNumber>
    </recommendedName>
</protein>
<name>RHLB_SHEON</name>
<dbReference type="EC" id="3.6.4.13" evidence="1"/>
<dbReference type="EMBL" id="AE014299">
    <property type="protein sequence ID" value="AAN53490.1"/>
    <property type="molecule type" value="Genomic_DNA"/>
</dbReference>
<dbReference type="RefSeq" id="NP_716045.1">
    <property type="nucleotide sequence ID" value="NC_004347.2"/>
</dbReference>
<dbReference type="RefSeq" id="WP_011070767.1">
    <property type="nucleotide sequence ID" value="NC_004347.2"/>
</dbReference>
<dbReference type="SMR" id="Q8EJQ5"/>
<dbReference type="STRING" id="211586.SO_0407"/>
<dbReference type="PaxDb" id="211586-SO_0407"/>
<dbReference type="KEGG" id="son:SO_0407"/>
<dbReference type="PATRIC" id="fig|211586.12.peg.397"/>
<dbReference type="eggNOG" id="COG0513">
    <property type="taxonomic scope" value="Bacteria"/>
</dbReference>
<dbReference type="HOGENOM" id="CLU_003041_1_3_6"/>
<dbReference type="OrthoDB" id="9805696at2"/>
<dbReference type="PhylomeDB" id="Q8EJQ5"/>
<dbReference type="BioCyc" id="SONE211586:G1GMP-392-MONOMER"/>
<dbReference type="Proteomes" id="UP000008186">
    <property type="component" value="Chromosome"/>
</dbReference>
<dbReference type="GO" id="GO:0005829">
    <property type="term" value="C:cytosol"/>
    <property type="evidence" value="ECO:0000318"/>
    <property type="project" value="GO_Central"/>
</dbReference>
<dbReference type="GO" id="GO:0005524">
    <property type="term" value="F:ATP binding"/>
    <property type="evidence" value="ECO:0007669"/>
    <property type="project" value="UniProtKB-UniRule"/>
</dbReference>
<dbReference type="GO" id="GO:0016887">
    <property type="term" value="F:ATP hydrolysis activity"/>
    <property type="evidence" value="ECO:0007669"/>
    <property type="project" value="RHEA"/>
</dbReference>
<dbReference type="GO" id="GO:0003723">
    <property type="term" value="F:RNA binding"/>
    <property type="evidence" value="ECO:0007669"/>
    <property type="project" value="UniProtKB-UniRule"/>
</dbReference>
<dbReference type="GO" id="GO:0003724">
    <property type="term" value="F:RNA helicase activity"/>
    <property type="evidence" value="ECO:0000318"/>
    <property type="project" value="GO_Central"/>
</dbReference>
<dbReference type="GO" id="GO:0006401">
    <property type="term" value="P:RNA catabolic process"/>
    <property type="evidence" value="ECO:0007669"/>
    <property type="project" value="UniProtKB-UniRule"/>
</dbReference>
<dbReference type="CDD" id="cd00268">
    <property type="entry name" value="DEADc"/>
    <property type="match status" value="1"/>
</dbReference>
<dbReference type="CDD" id="cd18787">
    <property type="entry name" value="SF2_C_DEAD"/>
    <property type="match status" value="1"/>
</dbReference>
<dbReference type="FunFam" id="3.40.50.300:FF:000008">
    <property type="entry name" value="ATP-dependent RNA helicase RhlB"/>
    <property type="match status" value="1"/>
</dbReference>
<dbReference type="FunFam" id="3.40.50.300:FF:000312">
    <property type="entry name" value="ATP-dependent RNA helicase RhlB"/>
    <property type="match status" value="1"/>
</dbReference>
<dbReference type="Gene3D" id="3.40.50.300">
    <property type="entry name" value="P-loop containing nucleotide triphosphate hydrolases"/>
    <property type="match status" value="2"/>
</dbReference>
<dbReference type="HAMAP" id="MF_00661">
    <property type="entry name" value="DEAD_helicase_RhlB"/>
    <property type="match status" value="1"/>
</dbReference>
<dbReference type="InterPro" id="IPR011545">
    <property type="entry name" value="DEAD/DEAH_box_helicase_dom"/>
</dbReference>
<dbReference type="InterPro" id="IPR050079">
    <property type="entry name" value="DEAD_box_RNA_helicase"/>
</dbReference>
<dbReference type="InterPro" id="IPR014001">
    <property type="entry name" value="Helicase_ATP-bd"/>
</dbReference>
<dbReference type="InterPro" id="IPR001650">
    <property type="entry name" value="Helicase_C-like"/>
</dbReference>
<dbReference type="InterPro" id="IPR027417">
    <property type="entry name" value="P-loop_NTPase"/>
</dbReference>
<dbReference type="InterPro" id="IPR000629">
    <property type="entry name" value="RNA-helicase_DEAD-box_CS"/>
</dbReference>
<dbReference type="InterPro" id="IPR023554">
    <property type="entry name" value="RNA_helicase_ATP-dep_RhlB"/>
</dbReference>
<dbReference type="InterPro" id="IPR014014">
    <property type="entry name" value="RNA_helicase_DEAD_Q_motif"/>
</dbReference>
<dbReference type="NCBIfam" id="NF003419">
    <property type="entry name" value="PRK04837.1"/>
    <property type="match status" value="1"/>
</dbReference>
<dbReference type="PANTHER" id="PTHR47959:SF10">
    <property type="entry name" value="ATP-DEPENDENT RNA HELICASE RHLB"/>
    <property type="match status" value="1"/>
</dbReference>
<dbReference type="PANTHER" id="PTHR47959">
    <property type="entry name" value="ATP-DEPENDENT RNA HELICASE RHLE-RELATED"/>
    <property type="match status" value="1"/>
</dbReference>
<dbReference type="Pfam" id="PF00270">
    <property type="entry name" value="DEAD"/>
    <property type="match status" value="1"/>
</dbReference>
<dbReference type="Pfam" id="PF00271">
    <property type="entry name" value="Helicase_C"/>
    <property type="match status" value="1"/>
</dbReference>
<dbReference type="SMART" id="SM00487">
    <property type="entry name" value="DEXDc"/>
    <property type="match status" value="1"/>
</dbReference>
<dbReference type="SMART" id="SM00490">
    <property type="entry name" value="HELICc"/>
    <property type="match status" value="1"/>
</dbReference>
<dbReference type="SUPFAM" id="SSF52540">
    <property type="entry name" value="P-loop containing nucleoside triphosphate hydrolases"/>
    <property type="match status" value="1"/>
</dbReference>
<dbReference type="PROSITE" id="PS00039">
    <property type="entry name" value="DEAD_ATP_HELICASE"/>
    <property type="match status" value="1"/>
</dbReference>
<dbReference type="PROSITE" id="PS51192">
    <property type="entry name" value="HELICASE_ATP_BIND_1"/>
    <property type="match status" value="1"/>
</dbReference>
<dbReference type="PROSITE" id="PS51194">
    <property type="entry name" value="HELICASE_CTER"/>
    <property type="match status" value="1"/>
</dbReference>
<dbReference type="PROSITE" id="PS51195">
    <property type="entry name" value="Q_MOTIF"/>
    <property type="match status" value="1"/>
</dbReference>
<feature type="chain" id="PRO_0000200784" description="ATP-dependent RNA helicase RhlB">
    <location>
        <begin position="1"/>
        <end position="439"/>
    </location>
</feature>
<feature type="domain" description="Helicase ATP-binding" evidence="1">
    <location>
        <begin position="40"/>
        <end position="219"/>
    </location>
</feature>
<feature type="domain" description="Helicase C-terminal" evidence="1">
    <location>
        <begin position="243"/>
        <end position="390"/>
    </location>
</feature>
<feature type="region of interest" description="Disordered" evidence="2">
    <location>
        <begin position="395"/>
        <end position="439"/>
    </location>
</feature>
<feature type="short sequence motif" description="Q motif">
    <location>
        <begin position="9"/>
        <end position="37"/>
    </location>
</feature>
<feature type="short sequence motif" description="DEAD box">
    <location>
        <begin position="165"/>
        <end position="168"/>
    </location>
</feature>
<feature type="compositionally biased region" description="Basic residues" evidence="2">
    <location>
        <begin position="425"/>
        <end position="439"/>
    </location>
</feature>
<feature type="binding site" evidence="1">
    <location>
        <begin position="53"/>
        <end position="60"/>
    </location>
    <ligand>
        <name>ATP</name>
        <dbReference type="ChEBI" id="CHEBI:30616"/>
    </ligand>
</feature>
<evidence type="ECO:0000255" key="1">
    <source>
        <dbReference type="HAMAP-Rule" id="MF_00661"/>
    </source>
</evidence>
<evidence type="ECO:0000256" key="2">
    <source>
        <dbReference type="SAM" id="MobiDB-lite"/>
    </source>
</evidence>
<gene>
    <name evidence="1" type="primary">rhlB</name>
    <name type="ordered locus">SO_0407</name>
</gene>
<reference key="1">
    <citation type="journal article" date="2002" name="Nat. Biotechnol.">
        <title>Genome sequence of the dissimilatory metal ion-reducing bacterium Shewanella oneidensis.</title>
        <authorList>
            <person name="Heidelberg J.F."/>
            <person name="Paulsen I.T."/>
            <person name="Nelson K.E."/>
            <person name="Gaidos E.J."/>
            <person name="Nelson W.C."/>
            <person name="Read T.D."/>
            <person name="Eisen J.A."/>
            <person name="Seshadri R."/>
            <person name="Ward N.L."/>
            <person name="Methe B.A."/>
            <person name="Clayton R.A."/>
            <person name="Meyer T."/>
            <person name="Tsapin A."/>
            <person name="Scott J."/>
            <person name="Beanan M.J."/>
            <person name="Brinkac L.M."/>
            <person name="Daugherty S.C."/>
            <person name="DeBoy R.T."/>
            <person name="Dodson R.J."/>
            <person name="Durkin A.S."/>
            <person name="Haft D.H."/>
            <person name="Kolonay J.F."/>
            <person name="Madupu R."/>
            <person name="Peterson J.D."/>
            <person name="Umayam L.A."/>
            <person name="White O."/>
            <person name="Wolf A.M."/>
            <person name="Vamathevan J.J."/>
            <person name="Weidman J.F."/>
            <person name="Impraim M."/>
            <person name="Lee K."/>
            <person name="Berry K.J."/>
            <person name="Lee C."/>
            <person name="Mueller J."/>
            <person name="Khouri H.M."/>
            <person name="Gill J."/>
            <person name="Utterback T.R."/>
            <person name="McDonald L.A."/>
            <person name="Feldblyum T.V."/>
            <person name="Smith H.O."/>
            <person name="Venter J.C."/>
            <person name="Nealson K.H."/>
            <person name="Fraser C.M."/>
        </authorList>
    </citation>
    <scope>NUCLEOTIDE SEQUENCE [LARGE SCALE GENOMIC DNA]</scope>
    <source>
        <strain>ATCC 700550 / JCM 31522 / CIP 106686 / LMG 19005 / NCIMB 14063 / MR-1</strain>
    </source>
</reference>
<keyword id="KW-0067">ATP-binding</keyword>
<keyword id="KW-0963">Cytoplasm</keyword>
<keyword id="KW-0347">Helicase</keyword>
<keyword id="KW-0378">Hydrolase</keyword>
<keyword id="KW-0547">Nucleotide-binding</keyword>
<keyword id="KW-1185">Reference proteome</keyword>
<keyword id="KW-0694">RNA-binding</keyword>
<proteinExistence type="inferred from homology"/>
<comment type="function">
    <text evidence="1">DEAD-box RNA helicase involved in RNA degradation. Has RNA-dependent ATPase activity and unwinds double-stranded RNA.</text>
</comment>
<comment type="catalytic activity">
    <reaction evidence="1">
        <text>ATP + H2O = ADP + phosphate + H(+)</text>
        <dbReference type="Rhea" id="RHEA:13065"/>
        <dbReference type="ChEBI" id="CHEBI:15377"/>
        <dbReference type="ChEBI" id="CHEBI:15378"/>
        <dbReference type="ChEBI" id="CHEBI:30616"/>
        <dbReference type="ChEBI" id="CHEBI:43474"/>
        <dbReference type="ChEBI" id="CHEBI:456216"/>
        <dbReference type="EC" id="3.6.4.13"/>
    </reaction>
</comment>
<comment type="subunit">
    <text evidence="1">Component of the RNA degradosome, which is a multiprotein complex involved in RNA processing and mRNA degradation.</text>
</comment>
<comment type="subcellular location">
    <subcellularLocation>
        <location evidence="1">Cytoplasm</location>
    </subcellularLocation>
</comment>
<comment type="similarity">
    <text evidence="1">Belongs to the DEAD box helicase family. RhlB subfamily.</text>
</comment>
<sequence>MSQTHLSNQKFADLPLHPEVKQALAENGFEFCTPIQALSLPVLLQSKDIAGQAQTGTGKTMAFLVATFNHLLSSSIPEGRQLNQPRAIIMAPTRELAIQIAKDAILLAKHTRLKVGIVYGGESYDVQRKVLDQGVDILIGTTGRIIDYVRQGIINLNAIQAVVLDEADRMFDLGFIKDIRFLFRRMPNADQRLNMLFSATLSMKVQELAYDHMNDPVKVEIAPEEKTSKNIKEEIFYPSQEDKMRLLLTLIEEDWPEKAIVFSNTKHSCENLWSWLEGDGHRVGLLTGDVPQKKRIRILEQFTQGQLDILVATDVAARGLHISDVSHVYNYDLPDDCEDYVHRIGRTGRAGNKGVSVSFACEEYALNLPAIETYINHSIPVSNYDRDALLDDIPSPVKIHRKHPAGARNLRERSGAGRTPGAHRSGGRPPRHDRTRRQP</sequence>
<accession>Q8EJQ5</accession>